<keyword id="KW-0687">Ribonucleoprotein</keyword>
<keyword id="KW-0689">Ribosomal protein</keyword>
<keyword id="KW-0694">RNA-binding</keyword>
<keyword id="KW-0699">rRNA-binding</keyword>
<dbReference type="EMBL" id="CP000805">
    <property type="protein sequence ID" value="ACD70629.1"/>
    <property type="molecule type" value="Genomic_DNA"/>
</dbReference>
<dbReference type="RefSeq" id="WP_010881650.1">
    <property type="nucleotide sequence ID" value="NC_021508.1"/>
</dbReference>
<dbReference type="SMR" id="B2S2F0"/>
<dbReference type="GeneID" id="93875990"/>
<dbReference type="KEGG" id="tpp:TPASS_0203"/>
<dbReference type="PATRIC" id="fig|455434.6.peg.206"/>
<dbReference type="Proteomes" id="UP000001202">
    <property type="component" value="Chromosome"/>
</dbReference>
<dbReference type="GO" id="GO:1990904">
    <property type="term" value="C:ribonucleoprotein complex"/>
    <property type="evidence" value="ECO:0007669"/>
    <property type="project" value="UniProtKB-KW"/>
</dbReference>
<dbReference type="GO" id="GO:0005840">
    <property type="term" value="C:ribosome"/>
    <property type="evidence" value="ECO:0007669"/>
    <property type="project" value="UniProtKB-KW"/>
</dbReference>
<dbReference type="GO" id="GO:0019843">
    <property type="term" value="F:rRNA binding"/>
    <property type="evidence" value="ECO:0007669"/>
    <property type="project" value="UniProtKB-UniRule"/>
</dbReference>
<dbReference type="GO" id="GO:0003735">
    <property type="term" value="F:structural constituent of ribosome"/>
    <property type="evidence" value="ECO:0007669"/>
    <property type="project" value="InterPro"/>
</dbReference>
<dbReference type="GO" id="GO:0006412">
    <property type="term" value="P:translation"/>
    <property type="evidence" value="ECO:0007669"/>
    <property type="project" value="UniProtKB-UniRule"/>
</dbReference>
<dbReference type="FunFam" id="3.30.1370.30:FF:000002">
    <property type="entry name" value="30S ribosomal protein S8"/>
    <property type="match status" value="1"/>
</dbReference>
<dbReference type="FunFam" id="3.30.1490.10:FF:000001">
    <property type="entry name" value="30S ribosomal protein S8"/>
    <property type="match status" value="1"/>
</dbReference>
<dbReference type="Gene3D" id="3.30.1370.30">
    <property type="match status" value="1"/>
</dbReference>
<dbReference type="Gene3D" id="3.30.1490.10">
    <property type="match status" value="1"/>
</dbReference>
<dbReference type="HAMAP" id="MF_01302_B">
    <property type="entry name" value="Ribosomal_uS8_B"/>
    <property type="match status" value="1"/>
</dbReference>
<dbReference type="InterPro" id="IPR000630">
    <property type="entry name" value="Ribosomal_uS8"/>
</dbReference>
<dbReference type="InterPro" id="IPR035987">
    <property type="entry name" value="Ribosomal_uS8_sf"/>
</dbReference>
<dbReference type="NCBIfam" id="NF001109">
    <property type="entry name" value="PRK00136.1"/>
    <property type="match status" value="1"/>
</dbReference>
<dbReference type="PANTHER" id="PTHR11758">
    <property type="entry name" value="40S RIBOSOMAL PROTEIN S15A"/>
    <property type="match status" value="1"/>
</dbReference>
<dbReference type="Pfam" id="PF00410">
    <property type="entry name" value="Ribosomal_S8"/>
    <property type="match status" value="1"/>
</dbReference>
<dbReference type="SUPFAM" id="SSF56047">
    <property type="entry name" value="Ribosomal protein S8"/>
    <property type="match status" value="1"/>
</dbReference>
<sequence>MGVSDPVADMLTKIRNAARAGHEKVDVPSSKLKVEVVKILKTEGYIRNFRKVEEDGSGCIRVFLKYDDNETSVIHGIERISTPGRRVYSGYKTLRRVYNGYGTLIVSTSLGVTTGRHAREQRVGGELICKVW</sequence>
<evidence type="ECO:0000255" key="1">
    <source>
        <dbReference type="HAMAP-Rule" id="MF_01302"/>
    </source>
</evidence>
<evidence type="ECO:0000305" key="2"/>
<feature type="chain" id="PRO_1000140632" description="Small ribosomal subunit protein uS8">
    <location>
        <begin position="1"/>
        <end position="132"/>
    </location>
</feature>
<protein>
    <recommendedName>
        <fullName evidence="1">Small ribosomal subunit protein uS8</fullName>
    </recommendedName>
    <alternativeName>
        <fullName evidence="2">30S ribosomal protein S8</fullName>
    </alternativeName>
</protein>
<reference key="1">
    <citation type="journal article" date="2008" name="BMC Microbiol.">
        <title>Complete genome sequence of Treponema pallidum ssp. pallidum strain SS14 determined with oligonucleotide arrays.</title>
        <authorList>
            <person name="Matejkova P."/>
            <person name="Strouhal M."/>
            <person name="Smajs D."/>
            <person name="Norris S.J."/>
            <person name="Palzkill T."/>
            <person name="Petrosino J.F."/>
            <person name="Sodergren E."/>
            <person name="Norton J.E."/>
            <person name="Singh J."/>
            <person name="Richmond T.A."/>
            <person name="Molla M.N."/>
            <person name="Albert T.J."/>
            <person name="Weinstock G.M."/>
        </authorList>
    </citation>
    <scope>NUCLEOTIDE SEQUENCE [LARGE SCALE GENOMIC DNA]</scope>
    <source>
        <strain>SS14</strain>
    </source>
</reference>
<proteinExistence type="inferred from homology"/>
<organism>
    <name type="scientific">Treponema pallidum subsp. pallidum (strain SS14)</name>
    <dbReference type="NCBI Taxonomy" id="455434"/>
    <lineage>
        <taxon>Bacteria</taxon>
        <taxon>Pseudomonadati</taxon>
        <taxon>Spirochaetota</taxon>
        <taxon>Spirochaetia</taxon>
        <taxon>Spirochaetales</taxon>
        <taxon>Treponemataceae</taxon>
        <taxon>Treponema</taxon>
    </lineage>
</organism>
<comment type="function">
    <text evidence="1">One of the primary rRNA binding proteins, it binds directly to 16S rRNA central domain where it helps coordinate assembly of the platform of the 30S subunit.</text>
</comment>
<comment type="subunit">
    <text evidence="1">Part of the 30S ribosomal subunit. Contacts proteins S5 and S12.</text>
</comment>
<comment type="similarity">
    <text evidence="1">Belongs to the universal ribosomal protein uS8 family.</text>
</comment>
<accession>B2S2F0</accession>
<gene>
    <name evidence="1" type="primary">rpsH</name>
    <name type="ordered locus">TPASS_0203</name>
</gene>
<name>RS8_TREPS</name>